<reference key="1">
    <citation type="journal article" date="1993" name="J. Biochem.">
        <title>Transcription factors positively and negatively regulating the Na,K-ATPase alpha 1 subunit gene.</title>
        <authorList>
            <person name="Watanabe Y."/>
            <person name="Kawakami K."/>
            <person name="Hirayama Y."/>
            <person name="Nagano K."/>
        </authorList>
    </citation>
    <scope>NUCLEOTIDE SEQUENCE [MRNA] (ISOFORM 1)</scope>
</reference>
<reference key="2">
    <citation type="submission" date="1994-07" db="EMBL/GenBank/DDBJ databases">
        <title>A human zinc finger homeodomain protein homologous to the chicken delta-crystallin enhancer binding protein, delta EF1.</title>
        <authorList>
            <person name="Bachman N.J."/>
            <person name="Scarpulla R.C."/>
        </authorList>
    </citation>
    <scope>NUCLEOTIDE SEQUENCE [MRNA] (ISOFORM 1)</scope>
</reference>
<reference key="3">
    <citation type="journal article" date="2004" name="Nat. Genet.">
        <title>Complete sequencing and characterization of 21,243 full-length human cDNAs.</title>
        <authorList>
            <person name="Ota T."/>
            <person name="Suzuki Y."/>
            <person name="Nishikawa T."/>
            <person name="Otsuki T."/>
            <person name="Sugiyama T."/>
            <person name="Irie R."/>
            <person name="Wakamatsu A."/>
            <person name="Hayashi K."/>
            <person name="Sato H."/>
            <person name="Nagai K."/>
            <person name="Kimura K."/>
            <person name="Makita H."/>
            <person name="Sekine M."/>
            <person name="Obayashi M."/>
            <person name="Nishi T."/>
            <person name="Shibahara T."/>
            <person name="Tanaka T."/>
            <person name="Ishii S."/>
            <person name="Yamamoto J."/>
            <person name="Saito K."/>
            <person name="Kawai Y."/>
            <person name="Isono Y."/>
            <person name="Nakamura Y."/>
            <person name="Nagahari K."/>
            <person name="Murakami K."/>
            <person name="Yasuda T."/>
            <person name="Iwayanagi T."/>
            <person name="Wagatsuma M."/>
            <person name="Shiratori A."/>
            <person name="Sudo H."/>
            <person name="Hosoiri T."/>
            <person name="Kaku Y."/>
            <person name="Kodaira H."/>
            <person name="Kondo H."/>
            <person name="Sugawara M."/>
            <person name="Takahashi M."/>
            <person name="Kanda K."/>
            <person name="Yokoi T."/>
            <person name="Furuya T."/>
            <person name="Kikkawa E."/>
            <person name="Omura Y."/>
            <person name="Abe K."/>
            <person name="Kamihara K."/>
            <person name="Katsuta N."/>
            <person name="Sato K."/>
            <person name="Tanikawa M."/>
            <person name="Yamazaki M."/>
            <person name="Ninomiya K."/>
            <person name="Ishibashi T."/>
            <person name="Yamashita H."/>
            <person name="Murakawa K."/>
            <person name="Fujimori K."/>
            <person name="Tanai H."/>
            <person name="Kimata M."/>
            <person name="Watanabe M."/>
            <person name="Hiraoka S."/>
            <person name="Chiba Y."/>
            <person name="Ishida S."/>
            <person name="Ono Y."/>
            <person name="Takiguchi S."/>
            <person name="Watanabe S."/>
            <person name="Yosida M."/>
            <person name="Hotuta T."/>
            <person name="Kusano J."/>
            <person name="Kanehori K."/>
            <person name="Takahashi-Fujii A."/>
            <person name="Hara H."/>
            <person name="Tanase T.-O."/>
            <person name="Nomura Y."/>
            <person name="Togiya S."/>
            <person name="Komai F."/>
            <person name="Hara R."/>
            <person name="Takeuchi K."/>
            <person name="Arita M."/>
            <person name="Imose N."/>
            <person name="Musashino K."/>
            <person name="Yuuki H."/>
            <person name="Oshima A."/>
            <person name="Sasaki N."/>
            <person name="Aotsuka S."/>
            <person name="Yoshikawa Y."/>
            <person name="Matsunawa H."/>
            <person name="Ichihara T."/>
            <person name="Shiohata N."/>
            <person name="Sano S."/>
            <person name="Moriya S."/>
            <person name="Momiyama H."/>
            <person name="Satoh N."/>
            <person name="Takami S."/>
            <person name="Terashima Y."/>
            <person name="Suzuki O."/>
            <person name="Nakagawa S."/>
            <person name="Senoh A."/>
            <person name="Mizoguchi H."/>
            <person name="Goto Y."/>
            <person name="Shimizu F."/>
            <person name="Wakebe H."/>
            <person name="Hishigaki H."/>
            <person name="Watanabe T."/>
            <person name="Sugiyama A."/>
            <person name="Takemoto M."/>
            <person name="Kawakami B."/>
            <person name="Yamazaki M."/>
            <person name="Watanabe K."/>
            <person name="Kumagai A."/>
            <person name="Itakura S."/>
            <person name="Fukuzumi Y."/>
            <person name="Fujimori Y."/>
            <person name="Komiyama M."/>
            <person name="Tashiro H."/>
            <person name="Tanigami A."/>
            <person name="Fujiwara T."/>
            <person name="Ono T."/>
            <person name="Yamada K."/>
            <person name="Fujii Y."/>
            <person name="Ozaki K."/>
            <person name="Hirao M."/>
            <person name="Ohmori Y."/>
            <person name="Kawabata A."/>
            <person name="Hikiji T."/>
            <person name="Kobatake N."/>
            <person name="Inagaki H."/>
            <person name="Ikema Y."/>
            <person name="Okamoto S."/>
            <person name="Okitani R."/>
            <person name="Kawakami T."/>
            <person name="Noguchi S."/>
            <person name="Itoh T."/>
            <person name="Shigeta K."/>
            <person name="Senba T."/>
            <person name="Matsumura K."/>
            <person name="Nakajima Y."/>
            <person name="Mizuno T."/>
            <person name="Morinaga M."/>
            <person name="Sasaki M."/>
            <person name="Togashi T."/>
            <person name="Oyama M."/>
            <person name="Hata H."/>
            <person name="Watanabe M."/>
            <person name="Komatsu T."/>
            <person name="Mizushima-Sugano J."/>
            <person name="Satoh T."/>
            <person name="Shirai Y."/>
            <person name="Takahashi Y."/>
            <person name="Nakagawa K."/>
            <person name="Okumura K."/>
            <person name="Nagase T."/>
            <person name="Nomura N."/>
            <person name="Kikuchi H."/>
            <person name="Masuho Y."/>
            <person name="Yamashita R."/>
            <person name="Nakai K."/>
            <person name="Yada T."/>
            <person name="Nakamura Y."/>
            <person name="Ohara O."/>
            <person name="Isogai T."/>
            <person name="Sugano S."/>
        </authorList>
    </citation>
    <scope>NUCLEOTIDE SEQUENCE [LARGE SCALE MRNA] (ISOFORMS 3 AND 4)</scope>
    <scope>NUCLEOTIDE SEQUENCE [LARGE SCALE MRNA] OF 1-798 (ISOFORM 5)</scope>
    <source>
        <tissue>Brain</tissue>
        <tissue>Thalamus</tissue>
    </source>
</reference>
<reference key="4">
    <citation type="journal article" date="2004" name="Nature">
        <title>The DNA sequence and comparative analysis of human chromosome 10.</title>
        <authorList>
            <person name="Deloukas P."/>
            <person name="Earthrowl M.E."/>
            <person name="Grafham D.V."/>
            <person name="Rubenfield M."/>
            <person name="French L."/>
            <person name="Steward C.A."/>
            <person name="Sims S.K."/>
            <person name="Jones M.C."/>
            <person name="Searle S."/>
            <person name="Scott C."/>
            <person name="Howe K."/>
            <person name="Hunt S.E."/>
            <person name="Andrews T.D."/>
            <person name="Gilbert J.G.R."/>
            <person name="Swarbreck D."/>
            <person name="Ashurst J.L."/>
            <person name="Taylor A."/>
            <person name="Battles J."/>
            <person name="Bird C.P."/>
            <person name="Ainscough R."/>
            <person name="Almeida J.P."/>
            <person name="Ashwell R.I.S."/>
            <person name="Ambrose K.D."/>
            <person name="Babbage A.K."/>
            <person name="Bagguley C.L."/>
            <person name="Bailey J."/>
            <person name="Banerjee R."/>
            <person name="Bates K."/>
            <person name="Beasley H."/>
            <person name="Bray-Allen S."/>
            <person name="Brown A.J."/>
            <person name="Brown J.Y."/>
            <person name="Burford D.C."/>
            <person name="Burrill W."/>
            <person name="Burton J."/>
            <person name="Cahill P."/>
            <person name="Camire D."/>
            <person name="Carter N.P."/>
            <person name="Chapman J.C."/>
            <person name="Clark S.Y."/>
            <person name="Clarke G."/>
            <person name="Clee C.M."/>
            <person name="Clegg S."/>
            <person name="Corby N."/>
            <person name="Coulson A."/>
            <person name="Dhami P."/>
            <person name="Dutta I."/>
            <person name="Dunn M."/>
            <person name="Faulkner L."/>
            <person name="Frankish A."/>
            <person name="Frankland J.A."/>
            <person name="Garner P."/>
            <person name="Garnett J."/>
            <person name="Gribble S."/>
            <person name="Griffiths C."/>
            <person name="Grocock R."/>
            <person name="Gustafson E."/>
            <person name="Hammond S."/>
            <person name="Harley J.L."/>
            <person name="Hart E."/>
            <person name="Heath P.D."/>
            <person name="Ho T.P."/>
            <person name="Hopkins B."/>
            <person name="Horne J."/>
            <person name="Howden P.J."/>
            <person name="Huckle E."/>
            <person name="Hynds C."/>
            <person name="Johnson C."/>
            <person name="Johnson D."/>
            <person name="Kana A."/>
            <person name="Kay M."/>
            <person name="Kimberley A.M."/>
            <person name="Kershaw J.K."/>
            <person name="Kokkinaki M."/>
            <person name="Laird G.K."/>
            <person name="Lawlor S."/>
            <person name="Lee H.M."/>
            <person name="Leongamornlert D.A."/>
            <person name="Laird G."/>
            <person name="Lloyd C."/>
            <person name="Lloyd D.M."/>
            <person name="Loveland J."/>
            <person name="Lovell J."/>
            <person name="McLaren S."/>
            <person name="McLay K.E."/>
            <person name="McMurray A."/>
            <person name="Mashreghi-Mohammadi M."/>
            <person name="Matthews L."/>
            <person name="Milne S."/>
            <person name="Nickerson T."/>
            <person name="Nguyen M."/>
            <person name="Overton-Larty E."/>
            <person name="Palmer S.A."/>
            <person name="Pearce A.V."/>
            <person name="Peck A.I."/>
            <person name="Pelan S."/>
            <person name="Phillimore B."/>
            <person name="Porter K."/>
            <person name="Rice C.M."/>
            <person name="Rogosin A."/>
            <person name="Ross M.T."/>
            <person name="Sarafidou T."/>
            <person name="Sehra H.K."/>
            <person name="Shownkeen R."/>
            <person name="Skuce C.D."/>
            <person name="Smith M."/>
            <person name="Standring L."/>
            <person name="Sycamore N."/>
            <person name="Tester J."/>
            <person name="Thorpe A."/>
            <person name="Torcasso W."/>
            <person name="Tracey A."/>
            <person name="Tromans A."/>
            <person name="Tsolas J."/>
            <person name="Wall M."/>
            <person name="Walsh J."/>
            <person name="Wang H."/>
            <person name="Weinstock K."/>
            <person name="West A.P."/>
            <person name="Willey D.L."/>
            <person name="Whitehead S.L."/>
            <person name="Wilming L."/>
            <person name="Wray P.W."/>
            <person name="Young L."/>
            <person name="Chen Y."/>
            <person name="Lovering R.C."/>
            <person name="Moschonas N.K."/>
            <person name="Siebert R."/>
            <person name="Fechtel K."/>
            <person name="Bentley D."/>
            <person name="Durbin R.M."/>
            <person name="Hubbard T."/>
            <person name="Doucette-Stamm L."/>
            <person name="Beck S."/>
            <person name="Smith D.R."/>
            <person name="Rogers J."/>
        </authorList>
    </citation>
    <scope>NUCLEOTIDE SEQUENCE [LARGE SCALE GENOMIC DNA]</scope>
</reference>
<reference key="5">
    <citation type="submission" date="2005-09" db="EMBL/GenBank/DDBJ databases">
        <authorList>
            <person name="Mural R.J."/>
            <person name="Istrail S."/>
            <person name="Sutton G.G."/>
            <person name="Florea L."/>
            <person name="Halpern A.L."/>
            <person name="Mobarry C.M."/>
            <person name="Lippert R."/>
            <person name="Walenz B."/>
            <person name="Shatkay H."/>
            <person name="Dew I."/>
            <person name="Miller J.R."/>
            <person name="Flanigan M.J."/>
            <person name="Edwards N.J."/>
            <person name="Bolanos R."/>
            <person name="Fasulo D."/>
            <person name="Halldorsson B.V."/>
            <person name="Hannenhalli S."/>
            <person name="Turner R."/>
            <person name="Yooseph S."/>
            <person name="Lu F."/>
            <person name="Nusskern D.R."/>
            <person name="Shue B.C."/>
            <person name="Zheng X.H."/>
            <person name="Zhong F."/>
            <person name="Delcher A.L."/>
            <person name="Huson D.H."/>
            <person name="Kravitz S.A."/>
            <person name="Mouchard L."/>
            <person name="Reinert K."/>
            <person name="Remington K.A."/>
            <person name="Clark A.G."/>
            <person name="Waterman M.S."/>
            <person name="Eichler E.E."/>
            <person name="Adams M.D."/>
            <person name="Hunkapiller M.W."/>
            <person name="Myers E.W."/>
            <person name="Venter J.C."/>
        </authorList>
    </citation>
    <scope>NUCLEOTIDE SEQUENCE [LARGE SCALE GENOMIC DNA]</scope>
</reference>
<reference key="6">
    <citation type="journal article" date="2004" name="Genome Res.">
        <title>The status, quality, and expansion of the NIH full-length cDNA project: the Mammalian Gene Collection (MGC).</title>
        <authorList>
            <consortium name="The MGC Project Team"/>
        </authorList>
    </citation>
    <scope>NUCLEOTIDE SEQUENCE [LARGE SCALE MRNA] (ISOFORM 2)</scope>
</reference>
<reference key="7">
    <citation type="journal article" date="1991" name="Science">
        <title>Identification of a zinc finger protein that inhibits IL-2 gene expression.</title>
        <authorList>
            <person name="Williams T.M."/>
            <person name="Moolten D."/>
            <person name="Burlein J."/>
            <person name="Romano J."/>
            <person name="Bhaerman R."/>
            <person name="Godillot A."/>
            <person name="Mellon M."/>
            <person name="Rauscher F.J. III"/>
            <person name="Kant J.A."/>
        </authorList>
    </citation>
    <scope>NUCLEOTIDE SEQUENCE [MRNA] OF 390-1124</scope>
</reference>
<reference key="8">
    <citation type="journal article" date="2005" name="Am. J. Hum. Genet.">
        <title>Mutations in TCF8 cause posterior polymorphous corneal dystrophy and ectopic expression of COL4A3 by corneal endothelial cells.</title>
        <authorList>
            <person name="Krafchak C.M."/>
            <person name="Pawar H."/>
            <person name="Moroi S.E."/>
            <person name="Sugar A."/>
            <person name="Lichter P.R."/>
            <person name="Mackey D.A."/>
            <person name="Mian S."/>
            <person name="Nairus T."/>
            <person name="Elner V."/>
            <person name="Schteingart M.T."/>
            <person name="Downs C.A."/>
            <person name="Kijek T.G."/>
            <person name="Johnson J.M."/>
            <person name="Trager E.H."/>
            <person name="Rozsa F.W."/>
            <person name="Mandal M.N.A."/>
            <person name="Epstein M.P."/>
            <person name="Vollrath D."/>
            <person name="Ayyagari R."/>
            <person name="Boehnke M."/>
            <person name="Richards J.E."/>
        </authorList>
    </citation>
    <scope>INVOLVEMENT IN PPCD3</scope>
</reference>
<reference key="9">
    <citation type="journal article" date="2005" name="J. Biol. Chem.">
        <title>Pc2-mediated sumoylation of Smad-interacting protein 1 attenuates transcriptional repression of E-cadherin.</title>
        <authorList>
            <person name="Long J."/>
            <person name="Zuo D."/>
            <person name="Park M."/>
        </authorList>
    </citation>
    <scope>SUMOYLATION AT LYS-347 AND LYS-774</scope>
</reference>
<reference key="10">
    <citation type="journal article" date="2006" name="Cell">
        <title>Global, in vivo, and site-specific phosphorylation dynamics in signaling networks.</title>
        <authorList>
            <person name="Olsen J.V."/>
            <person name="Blagoev B."/>
            <person name="Gnad F."/>
            <person name="Macek B."/>
            <person name="Kumar C."/>
            <person name="Mortensen P."/>
            <person name="Mann M."/>
        </authorList>
    </citation>
    <scope>IDENTIFICATION BY MASS SPECTROMETRY [LARGE SCALE ANALYSIS]</scope>
    <source>
        <tissue>Cervix carcinoma</tissue>
    </source>
</reference>
<reference key="11">
    <citation type="journal article" date="2008" name="Proc. Natl. Acad. Sci. U.S.A.">
        <title>A quantitative atlas of mitotic phosphorylation.</title>
        <authorList>
            <person name="Dephoure N."/>
            <person name="Zhou C."/>
            <person name="Villen J."/>
            <person name="Beausoleil S.A."/>
            <person name="Bakalarski C.E."/>
            <person name="Elledge S.J."/>
            <person name="Gygi S.P."/>
        </authorList>
    </citation>
    <scope>PHOSPHORYLATION [LARGE SCALE ANALYSIS] AT SER-322</scope>
    <scope>IDENTIFICATION BY MASS SPECTROMETRY [LARGE SCALE ANALYSIS]</scope>
    <source>
        <tissue>Cervix carcinoma</tissue>
    </source>
</reference>
<reference key="12">
    <citation type="journal article" date="2009" name="Anal. Chem.">
        <title>Lys-N and trypsin cover complementary parts of the phosphoproteome in a refined SCX-based approach.</title>
        <authorList>
            <person name="Gauci S."/>
            <person name="Helbig A.O."/>
            <person name="Slijper M."/>
            <person name="Krijgsveld J."/>
            <person name="Heck A.J."/>
            <person name="Mohammed S."/>
        </authorList>
    </citation>
    <scope>IDENTIFICATION BY MASS SPECTROMETRY [LARGE SCALE ANALYSIS]</scope>
</reference>
<reference key="13">
    <citation type="journal article" date="2009" name="Nat. Cell Biol.">
        <title>The EMT-activator ZEB1 promotes tumorigenicity by repressing stemness-inhibiting microRNAs.</title>
        <authorList>
            <person name="Wellner U."/>
            <person name="Schubert J."/>
            <person name="Burk U.C."/>
            <person name="Schmalhofer O."/>
            <person name="Zhu F."/>
            <person name="Sonntag A."/>
            <person name="Waldvogel B."/>
            <person name="Vannier C."/>
            <person name="Darling D."/>
            <person name="zur Hausen A."/>
            <person name="Brunton V.G."/>
            <person name="Morton J."/>
            <person name="Sansom O."/>
            <person name="Schuler J."/>
            <person name="Stemmler M.P."/>
            <person name="Herzberger C."/>
            <person name="Hopt U."/>
            <person name="Keck T."/>
            <person name="Brabletz S."/>
            <person name="Brabletz T."/>
        </authorList>
    </citation>
    <scope>FUNCTION</scope>
</reference>
<reference key="14">
    <citation type="journal article" date="2009" name="Sci. Signal.">
        <title>Quantitative phosphoproteomic analysis of T cell receptor signaling reveals system-wide modulation of protein-protein interactions.</title>
        <authorList>
            <person name="Mayya V."/>
            <person name="Lundgren D.H."/>
            <person name="Hwang S.-I."/>
            <person name="Rezaul K."/>
            <person name="Wu L."/>
            <person name="Eng J.K."/>
            <person name="Rodionov V."/>
            <person name="Han D.K."/>
        </authorList>
    </citation>
    <scope>PHOSPHORYLATION [LARGE SCALE ANALYSIS] AT SER-642; SER-679 AND THR-702</scope>
    <scope>IDENTIFICATION BY MASS SPECTROMETRY [LARGE SCALE ANALYSIS]</scope>
    <source>
        <tissue>Leukemic T-cell</tissue>
    </source>
</reference>
<reference key="15">
    <citation type="journal article" date="2010" name="Biochem. J.">
        <title>ZEB1 and CtBP form a repressive complex at a distal promoter element of the BCL6 locus.</title>
        <authorList>
            <person name="Papadopoulou V."/>
            <person name="Postigo A."/>
            <person name="Sanchez-Tillo E."/>
            <person name="Porter A.C."/>
            <person name="Wagner S.D."/>
        </authorList>
    </citation>
    <scope>FUNCTION</scope>
</reference>
<reference key="16">
    <citation type="journal article" date="2010" name="Oncogene">
        <title>ZEB1 represses E-cadherin and induces an EMT by recruiting the SWI/SNF chromatin-remodeling protein BRG1.</title>
        <authorList>
            <person name="Sanchez-Tillo E."/>
            <person name="Lazaro A."/>
            <person name="Torrent R."/>
            <person name="Cuatrecasas M."/>
            <person name="Vaquero E.C."/>
            <person name="Castells A."/>
            <person name="Engel P."/>
            <person name="Postigo A."/>
        </authorList>
    </citation>
    <scope>FUNCTION</scope>
    <scope>SUBCELLULAR LOCATION</scope>
    <scope>INTERACTION WITH SMARCA4</scope>
    <scope>TISSUE SPECIFICITY</scope>
</reference>
<reference key="17">
    <citation type="journal article" date="2010" name="Sci. Signal.">
        <title>Quantitative phosphoproteomics reveals widespread full phosphorylation site occupancy during mitosis.</title>
        <authorList>
            <person name="Olsen J.V."/>
            <person name="Vermeulen M."/>
            <person name="Santamaria A."/>
            <person name="Kumar C."/>
            <person name="Miller M.L."/>
            <person name="Jensen L.J."/>
            <person name="Gnad F."/>
            <person name="Cox J."/>
            <person name="Jensen T.S."/>
            <person name="Nigg E.A."/>
            <person name="Brunak S."/>
            <person name="Mann M."/>
        </authorList>
    </citation>
    <scope>PHOSPHORYLATION [LARGE SCALE ANALYSIS] AT SER-679</scope>
    <scope>IDENTIFICATION BY MASS SPECTROMETRY [LARGE SCALE ANALYSIS]</scope>
    <source>
        <tissue>Cervix carcinoma</tissue>
    </source>
</reference>
<reference key="18">
    <citation type="journal article" date="2011" name="BMC Syst. Biol.">
        <title>Initial characterization of the human central proteome.</title>
        <authorList>
            <person name="Burkard T.R."/>
            <person name="Planyavsky M."/>
            <person name="Kaupe I."/>
            <person name="Breitwieser F.P."/>
            <person name="Buerckstuemmer T."/>
            <person name="Bennett K.L."/>
            <person name="Superti-Furga G."/>
            <person name="Colinge J."/>
        </authorList>
    </citation>
    <scope>IDENTIFICATION BY MASS SPECTROMETRY [LARGE SCALE ANALYSIS]</scope>
</reference>
<reference key="19">
    <citation type="journal article" date="2013" name="J. Proteome Res.">
        <title>Toward a comprehensive characterization of a human cancer cell phosphoproteome.</title>
        <authorList>
            <person name="Zhou H."/>
            <person name="Di Palma S."/>
            <person name="Preisinger C."/>
            <person name="Peng M."/>
            <person name="Polat A.N."/>
            <person name="Heck A.J."/>
            <person name="Mohammed S."/>
        </authorList>
    </citation>
    <scope>PHOSPHORYLATION [LARGE SCALE ANALYSIS] AT SER-679 AND THR-702</scope>
    <scope>IDENTIFICATION BY MASS SPECTROMETRY [LARGE SCALE ANALYSIS]</scope>
    <source>
        <tissue>Cervix carcinoma</tissue>
        <tissue>Erythroleukemia</tissue>
    </source>
</reference>
<reference key="20">
    <citation type="journal article" date="2014" name="Nat. Struct. Mol. Biol.">
        <title>Uncovering global SUMOylation signaling networks in a site-specific manner.</title>
        <authorList>
            <person name="Hendriks I.A."/>
            <person name="D'Souza R.C."/>
            <person name="Yang B."/>
            <person name="Verlaan-de Vries M."/>
            <person name="Mann M."/>
            <person name="Vertegaal A.C."/>
        </authorList>
    </citation>
    <scope>SUMOYLATION [LARGE SCALE ANALYSIS] AT LYS-493; LYS-504 AND LYS-515</scope>
    <scope>IDENTIFICATION BY MASS SPECTROMETRY [LARGE SCALE ANALYSIS]</scope>
</reference>
<reference key="21">
    <citation type="journal article" date="2014" name="Proc. Natl. Acad. Sci. U.S.A.">
        <title>Mapping of SUMO sites and analysis of SUMOylation changes induced by external stimuli.</title>
        <authorList>
            <person name="Impens F."/>
            <person name="Radoshevich L."/>
            <person name="Cossart P."/>
            <person name="Ribet D."/>
        </authorList>
    </citation>
    <scope>SUMOYLATION [LARGE SCALE ANALYSIS] AT LYS-493</scope>
    <scope>IDENTIFICATION BY MASS SPECTROMETRY [LARGE SCALE ANALYSIS]</scope>
</reference>
<reference key="22">
    <citation type="journal article" date="2015" name="Cell Rep.">
        <title>SUMO-2 orchestrates chromatin modifiers in response to DNA damage.</title>
        <authorList>
            <person name="Hendriks I.A."/>
            <person name="Treffers L.W."/>
            <person name="Verlaan-de Vries M."/>
            <person name="Olsen J.V."/>
            <person name="Vertegaal A.C."/>
        </authorList>
    </citation>
    <scope>SUMOYLATION [LARGE SCALE ANALYSIS] AT LYS-493; LYS-504 AND LYS-515</scope>
    <scope>IDENTIFICATION BY MASS SPECTROMETRY [LARGE SCALE ANALYSIS]</scope>
</reference>
<reference key="23">
    <citation type="journal article" date="2015" name="Mol. Cell. Proteomics">
        <title>System-wide analysis of SUMOylation dynamics in response to replication stress reveals novel small ubiquitin-like modified target proteins and acceptor lysines relevant for genome stability.</title>
        <authorList>
            <person name="Xiao Z."/>
            <person name="Chang J.G."/>
            <person name="Hendriks I.A."/>
            <person name="Sigurdsson J.O."/>
            <person name="Olsen J.V."/>
            <person name="Vertegaal A.C."/>
        </authorList>
    </citation>
    <scope>SUMOYLATION [LARGE SCALE ANALYSIS] AT LYS-493; LYS-504 AND LYS-515</scope>
    <scope>IDENTIFICATION BY MASS SPECTROMETRY [LARGE SCALE ANALYSIS]</scope>
</reference>
<reference key="24">
    <citation type="journal article" date="2017" name="Nat. Struct. Mol. Biol.">
        <title>Site-specific mapping of the human SUMO proteome reveals co-modification with phosphorylation.</title>
        <authorList>
            <person name="Hendriks I.A."/>
            <person name="Lyon D."/>
            <person name="Young C."/>
            <person name="Jensen L.J."/>
            <person name="Vertegaal A.C."/>
            <person name="Nielsen M.L."/>
        </authorList>
    </citation>
    <scope>SUMOYLATION [LARGE SCALE ANALYSIS] AT LYS-186; LYS-195; LYS-307; LYS-331; LYS-335; LYS-347; LYS-439; LYS-493; LYS-504; LYS-515; LYS-548; LYS-553 AND LYS-774</scope>
    <scope>IDENTIFICATION BY MASS SPECTROMETRY [LARGE SCALE ANALYSIS]</scope>
</reference>
<reference key="25">
    <citation type="journal article" date="2017" name="Am. J. Cancer Res.">
        <title>USP51 promotes deubiquitination and stabilization of ZEB1.</title>
        <authorList>
            <person name="Zhou Z."/>
            <person name="Zhang P."/>
            <person name="Hu X."/>
            <person name="Kim J."/>
            <person name="Yao F."/>
            <person name="Xiao Z."/>
            <person name="Zeng L."/>
            <person name="Chang L."/>
            <person name="Sun Y."/>
            <person name="Ma L."/>
        </authorList>
    </citation>
    <scope>DEUBIQUITINATION BY USP51</scope>
</reference>
<reference key="26">
    <citation type="submission" date="2007-04" db="PDB data bank">
        <title>Solution structure of the homeobox domain from human NIL-2-A zinc finger protein, transcription factor 8.</title>
        <authorList>
            <consortium name="RIKEN structural genomics initiative (RSGI)"/>
        </authorList>
    </citation>
    <scope>STRUCTURE BY NMR OF 583-642</scope>
</reference>
<reference key="27">
    <citation type="journal article" date="2010" name="Am. J. Hum. Genet.">
        <title>Missense mutations in TCF8 cause late-onset Fuchs corneal dystrophy and interact with FCD4 on chromosome 9p.</title>
        <authorList>
            <person name="Riazuddin S.A."/>
            <person name="Zaghloul N.A."/>
            <person name="Al-Saif A."/>
            <person name="Davey L."/>
            <person name="Diplas B.H."/>
            <person name="Meadows D.N."/>
            <person name="Eghrari A.O."/>
            <person name="Minear M.A."/>
            <person name="Li Y.J."/>
            <person name="Klintworth G.K."/>
            <person name="Afshari N."/>
            <person name="Gregory S.G."/>
            <person name="Gottsch J.D."/>
            <person name="Katsanis N."/>
        </authorList>
    </citation>
    <scope>VARIANTS FECD6 THR-78; ALA-649; PRO-810; PRO-840 AND THR-905</scope>
</reference>
<reference key="28">
    <citation type="journal article" date="2013" name="Invest. Ophthalmol. Vis. Sci.">
        <title>Mutational spectrum of the ZEB1 gene in corneal dystrophies supports a genotype-phenotype correlation.</title>
        <authorList>
            <person name="Lechner J."/>
            <person name="Dash D.P."/>
            <person name="Muszynska D."/>
            <person name="Hosseini M."/>
            <person name="Segev F."/>
            <person name="George S."/>
            <person name="Frazer D.G."/>
            <person name="Moore J.E."/>
            <person name="Kaye S.B."/>
            <person name="Young T."/>
            <person name="Simpson D.A."/>
            <person name="Churchill A.J."/>
            <person name="Heon E."/>
            <person name="Willoughby C.E."/>
        </authorList>
    </citation>
    <scope>INVOLVEMENT IN FECD6 AND PPCD3</scope>
    <scope>VARIANT FECD6 HIS-640</scope>
    <scope>CHARACTERIZATION OF VARIANTS FECD6 THR-78 AND HIS-640</scope>
    <scope>VARIANT GLU-525</scope>
</reference>
<reference key="29">
    <citation type="journal article" date="2014" name="Invest. Ophthalmol. Vis. Sci.">
        <title>Functional impact of ZEB1 mutations associated with posterior polymorphous and Fuchs' endothelial corneal dystrophies.</title>
        <authorList>
            <person name="Chung D.W."/>
            <person name="Frausto R.F."/>
            <person name="Ann L.B."/>
            <person name="Jang M.S."/>
            <person name="Aldave A.J."/>
        </authorList>
    </citation>
    <scope>VARIANTS FECD6 THR-78; ALA-649; SER-696; PRO-810; PRO-840 AND GLY-905</scope>
    <scope>CHARACTERIZATION OF VARIANTS FECD6 THR-78; ALA-649; SER-696; PRO-810; PRO-840 AND GLY-905</scope>
    <scope>SUBCELLULAR LOCATION</scope>
</reference>
<dbReference type="EMBL" id="D15050">
    <property type="protein sequence ID" value="BAA03646.1"/>
    <property type="molecule type" value="mRNA"/>
</dbReference>
<dbReference type="EMBL" id="U12170">
    <property type="protein sequence ID" value="AAA20602.1"/>
    <property type="molecule type" value="mRNA"/>
</dbReference>
<dbReference type="EMBL" id="AK091478">
    <property type="protein sequence ID" value="BAC03673.1"/>
    <property type="molecule type" value="mRNA"/>
</dbReference>
<dbReference type="EMBL" id="AK296244">
    <property type="protein sequence ID" value="BAG58962.1"/>
    <property type="molecule type" value="mRNA"/>
</dbReference>
<dbReference type="EMBL" id="AK300830">
    <property type="protein sequence ID" value="BAG62481.1"/>
    <property type="status" value="ALT_FRAME"/>
    <property type="molecule type" value="mRNA"/>
</dbReference>
<dbReference type="EMBL" id="AL158080">
    <property type="status" value="NOT_ANNOTATED_CDS"/>
    <property type="molecule type" value="Genomic_DNA"/>
</dbReference>
<dbReference type="EMBL" id="AL161935">
    <property type="status" value="NOT_ANNOTATED_CDS"/>
    <property type="molecule type" value="Genomic_DNA"/>
</dbReference>
<dbReference type="EMBL" id="AL117340">
    <property type="status" value="NOT_ANNOTATED_CDS"/>
    <property type="molecule type" value="Genomic_DNA"/>
</dbReference>
<dbReference type="EMBL" id="AL355148">
    <property type="status" value="NOT_ANNOTATED_CDS"/>
    <property type="molecule type" value="Genomic_DNA"/>
</dbReference>
<dbReference type="EMBL" id="CH471072">
    <property type="protein sequence ID" value="EAW85989.1"/>
    <property type="molecule type" value="Genomic_DNA"/>
</dbReference>
<dbReference type="EMBL" id="BC112392">
    <property type="protein sequence ID" value="AAI12393.1"/>
    <property type="molecule type" value="mRNA"/>
</dbReference>
<dbReference type="EMBL" id="M81699">
    <property type="status" value="NOT_ANNOTATED_CDS"/>
    <property type="molecule type" value="mRNA"/>
</dbReference>
<dbReference type="CCDS" id="CCDS44370.1">
    <molecule id="P37275-5"/>
</dbReference>
<dbReference type="CCDS" id="CCDS53505.1">
    <molecule id="P37275-2"/>
</dbReference>
<dbReference type="CCDS" id="CCDS53506.1">
    <molecule id="P37275-4"/>
</dbReference>
<dbReference type="CCDS" id="CCDS53507.1">
    <molecule id="P37275-3"/>
</dbReference>
<dbReference type="CCDS" id="CCDS7169.1">
    <molecule id="P37275-1"/>
</dbReference>
<dbReference type="PIR" id="JX0293">
    <property type="entry name" value="JX0293"/>
</dbReference>
<dbReference type="RefSeq" id="NP_001121600.1">
    <molecule id="P37275-5"/>
    <property type="nucleotide sequence ID" value="NM_001128128.3"/>
</dbReference>
<dbReference type="RefSeq" id="NP_001167564.1">
    <molecule id="P37275-4"/>
    <property type="nucleotide sequence ID" value="NM_001174093.2"/>
</dbReference>
<dbReference type="RefSeq" id="NP_001167565.1">
    <property type="nucleotide sequence ID" value="NM_001174094.1"/>
</dbReference>
<dbReference type="RefSeq" id="NP_001167566.1">
    <molecule id="P37275-3"/>
    <property type="nucleotide sequence ID" value="NM_001174095.2"/>
</dbReference>
<dbReference type="RefSeq" id="NP_001167567.1">
    <molecule id="P37275-2"/>
    <property type="nucleotide sequence ID" value="NM_001174096.2"/>
</dbReference>
<dbReference type="RefSeq" id="NP_110378.3">
    <molecule id="P37275-1"/>
    <property type="nucleotide sequence ID" value="NM_030751.5"/>
</dbReference>
<dbReference type="PDB" id="2E19">
    <property type="method" value="NMR"/>
    <property type="chains" value="A=586-642"/>
</dbReference>
<dbReference type="PDBsum" id="2E19"/>
<dbReference type="SMR" id="P37275"/>
<dbReference type="BioGRID" id="112796">
    <property type="interactions" value="183"/>
</dbReference>
<dbReference type="CORUM" id="P37275"/>
<dbReference type="ELM" id="P37275"/>
<dbReference type="FunCoup" id="P37275">
    <property type="interactions" value="2708"/>
</dbReference>
<dbReference type="IntAct" id="P37275">
    <property type="interactions" value="29"/>
</dbReference>
<dbReference type="MINT" id="P37275"/>
<dbReference type="STRING" id="9606.ENSP00000354487"/>
<dbReference type="GlyGen" id="P37275">
    <property type="glycosylation" value="3 sites, 1 O-linked glycan (1 site)"/>
</dbReference>
<dbReference type="iPTMnet" id="P37275"/>
<dbReference type="PhosphoSitePlus" id="P37275"/>
<dbReference type="BioMuta" id="ZEB1"/>
<dbReference type="DMDM" id="6166575"/>
<dbReference type="jPOST" id="P37275"/>
<dbReference type="MassIVE" id="P37275"/>
<dbReference type="PaxDb" id="9606-ENSP00000354487"/>
<dbReference type="PeptideAtlas" id="P37275"/>
<dbReference type="ProteomicsDB" id="19473"/>
<dbReference type="ProteomicsDB" id="26586"/>
<dbReference type="ProteomicsDB" id="55272">
    <molecule id="P37275-1"/>
</dbReference>
<dbReference type="ProteomicsDB" id="61322"/>
<dbReference type="ProteomicsDB" id="65678"/>
<dbReference type="Pumba" id="P37275"/>
<dbReference type="Antibodypedia" id="12930">
    <property type="antibodies" value="750 antibodies from 44 providers"/>
</dbReference>
<dbReference type="CPTC" id="P37275">
    <property type="antibodies" value="3 antibodies"/>
</dbReference>
<dbReference type="DNASU" id="6935"/>
<dbReference type="Ensembl" id="ENST00000320985.14">
    <molecule id="P37275-1"/>
    <property type="protein sequence ID" value="ENSP00000319248.9"/>
    <property type="gene ID" value="ENSG00000148516.23"/>
</dbReference>
<dbReference type="Ensembl" id="ENST00000424869.6">
    <molecule id="P37275-2"/>
    <property type="protein sequence ID" value="ENSP00000415961.2"/>
    <property type="gene ID" value="ENSG00000148516.23"/>
</dbReference>
<dbReference type="Ensembl" id="ENST00000446923.7">
    <molecule id="P37275-5"/>
    <property type="protein sequence ID" value="ENSP00000391612.2"/>
    <property type="gene ID" value="ENSG00000148516.23"/>
</dbReference>
<dbReference type="Ensembl" id="ENST00000542815.7">
    <molecule id="P37275-3"/>
    <property type="protein sequence ID" value="ENSP00000444891.2"/>
    <property type="gene ID" value="ENSG00000148516.23"/>
</dbReference>
<dbReference type="Ensembl" id="ENST00000560721.6">
    <molecule id="P37275-4"/>
    <property type="protein sequence ID" value="ENSP00000452787.1"/>
    <property type="gene ID" value="ENSG00000148516.23"/>
</dbReference>
<dbReference type="GeneID" id="6935"/>
<dbReference type="KEGG" id="hsa:6935"/>
<dbReference type="MANE-Select" id="ENST00000424869.6">
    <molecule id="P37275-2"/>
    <property type="protein sequence ID" value="ENSP00000415961.2"/>
    <property type="RefSeq nucleotide sequence ID" value="NM_001174096.2"/>
    <property type="RefSeq protein sequence ID" value="NP_001167567.1"/>
</dbReference>
<dbReference type="UCSC" id="uc001ivs.5">
    <molecule id="P37275-1"/>
    <property type="organism name" value="human"/>
</dbReference>
<dbReference type="AGR" id="HGNC:11642"/>
<dbReference type="CTD" id="6935"/>
<dbReference type="DisGeNET" id="6935"/>
<dbReference type="GeneCards" id="ZEB1"/>
<dbReference type="HGNC" id="HGNC:11642">
    <property type="gene designation" value="ZEB1"/>
</dbReference>
<dbReference type="HPA" id="ENSG00000148516">
    <property type="expression patterns" value="Low tissue specificity"/>
</dbReference>
<dbReference type="MalaCards" id="ZEB1"/>
<dbReference type="MIM" id="189909">
    <property type="type" value="gene"/>
</dbReference>
<dbReference type="MIM" id="609141">
    <property type="type" value="phenotype"/>
</dbReference>
<dbReference type="MIM" id="613270">
    <property type="type" value="phenotype"/>
</dbReference>
<dbReference type="neXtProt" id="NX_P37275"/>
<dbReference type="OpenTargets" id="ENSG00000148516"/>
<dbReference type="Orphanet" id="98974">
    <property type="disease" value="Fuchs endothelial corneal dystrophy"/>
</dbReference>
<dbReference type="Orphanet" id="98973">
    <property type="disease" value="Posterior polymorphous corneal dystrophy"/>
</dbReference>
<dbReference type="PharmGKB" id="PA162409589"/>
<dbReference type="VEuPathDB" id="HostDB:ENSG00000148516"/>
<dbReference type="eggNOG" id="KOG3623">
    <property type="taxonomic scope" value="Eukaryota"/>
</dbReference>
<dbReference type="GeneTree" id="ENSGT00950000183208"/>
<dbReference type="HOGENOM" id="CLU_005890_0_1_1"/>
<dbReference type="InParanoid" id="P37275"/>
<dbReference type="OMA" id="SYCKREP"/>
<dbReference type="OrthoDB" id="7491548at2759"/>
<dbReference type="PAN-GO" id="P37275">
    <property type="GO annotations" value="4 GO annotations based on evolutionary models"/>
</dbReference>
<dbReference type="PhylomeDB" id="P37275"/>
<dbReference type="TreeFam" id="TF331759"/>
<dbReference type="PathwayCommons" id="P37275"/>
<dbReference type="Reactome" id="R-HSA-6785807">
    <property type="pathway name" value="Interleukin-4 and Interleukin-13 signaling"/>
</dbReference>
<dbReference type="Reactome" id="R-HSA-9926550">
    <property type="pathway name" value="Regulation of MITF-M-dependent genes involved in extracellular matrix, focal adhesion and epithelial-to-mesenchymal transition"/>
</dbReference>
<dbReference type="SignaLink" id="P37275"/>
<dbReference type="SIGNOR" id="P37275"/>
<dbReference type="BioGRID-ORCS" id="6935">
    <property type="hits" value="42 hits in 1184 CRISPR screens"/>
</dbReference>
<dbReference type="ChiTaRS" id="ZEB1">
    <property type="organism name" value="human"/>
</dbReference>
<dbReference type="EvolutionaryTrace" id="P37275"/>
<dbReference type="GeneWiki" id="ZEB1"/>
<dbReference type="GenomeRNAi" id="6935"/>
<dbReference type="Pharos" id="P37275">
    <property type="development level" value="Tbio"/>
</dbReference>
<dbReference type="PRO" id="PR:P37275"/>
<dbReference type="Proteomes" id="UP000005640">
    <property type="component" value="Chromosome 10"/>
</dbReference>
<dbReference type="RNAct" id="P37275">
    <property type="molecule type" value="protein"/>
</dbReference>
<dbReference type="Bgee" id="ENSG00000148516">
    <property type="expression patterns" value="Expressed in calcaneal tendon and 211 other cell types or tissues"/>
</dbReference>
<dbReference type="ExpressionAtlas" id="P37275">
    <property type="expression patterns" value="baseline and differential"/>
</dbReference>
<dbReference type="GO" id="GO:0000785">
    <property type="term" value="C:chromatin"/>
    <property type="evidence" value="ECO:0000247"/>
    <property type="project" value="NTNU_SB"/>
</dbReference>
<dbReference type="GO" id="GO:0005829">
    <property type="term" value="C:cytosol"/>
    <property type="evidence" value="ECO:0000314"/>
    <property type="project" value="HPA"/>
</dbReference>
<dbReference type="GO" id="GO:0005654">
    <property type="term" value="C:nucleoplasm"/>
    <property type="evidence" value="ECO:0000314"/>
    <property type="project" value="HPA"/>
</dbReference>
<dbReference type="GO" id="GO:0005634">
    <property type="term" value="C:nucleus"/>
    <property type="evidence" value="ECO:0000314"/>
    <property type="project" value="UniProtKB"/>
</dbReference>
<dbReference type="GO" id="GO:0003682">
    <property type="term" value="F:chromatin binding"/>
    <property type="evidence" value="ECO:0007669"/>
    <property type="project" value="Ensembl"/>
</dbReference>
<dbReference type="GO" id="GO:0003700">
    <property type="term" value="F:DNA-binding transcription factor activity"/>
    <property type="evidence" value="ECO:0000304"/>
    <property type="project" value="ProtInc"/>
</dbReference>
<dbReference type="GO" id="GO:0000981">
    <property type="term" value="F:DNA-binding transcription factor activity, RNA polymerase II-specific"/>
    <property type="evidence" value="ECO:0000247"/>
    <property type="project" value="NTNU_SB"/>
</dbReference>
<dbReference type="GO" id="GO:0001227">
    <property type="term" value="F:DNA-binding transcription repressor activity, RNA polymerase II-specific"/>
    <property type="evidence" value="ECO:0000314"/>
    <property type="project" value="BHF-UCL"/>
</dbReference>
<dbReference type="GO" id="GO:0070888">
    <property type="term" value="F:E-box binding"/>
    <property type="evidence" value="ECO:0000250"/>
    <property type="project" value="UniProtKB"/>
</dbReference>
<dbReference type="GO" id="GO:0000978">
    <property type="term" value="F:RNA polymerase II cis-regulatory region sequence-specific DNA binding"/>
    <property type="evidence" value="ECO:0000318"/>
    <property type="project" value="GO_Central"/>
</dbReference>
<dbReference type="GO" id="GO:0008270">
    <property type="term" value="F:zinc ion binding"/>
    <property type="evidence" value="ECO:0000304"/>
    <property type="project" value="ProtInc"/>
</dbReference>
<dbReference type="GO" id="GO:0051216">
    <property type="term" value="P:cartilage development"/>
    <property type="evidence" value="ECO:0007669"/>
    <property type="project" value="Ensembl"/>
</dbReference>
<dbReference type="GO" id="GO:0030154">
    <property type="term" value="P:cell differentiation"/>
    <property type="evidence" value="ECO:0007669"/>
    <property type="project" value="UniProtKB-KW"/>
</dbReference>
<dbReference type="GO" id="GO:0071230">
    <property type="term" value="P:cellular response to amino acid stimulus"/>
    <property type="evidence" value="ECO:0007669"/>
    <property type="project" value="Ensembl"/>
</dbReference>
<dbReference type="GO" id="GO:0007417">
    <property type="term" value="P:central nervous system development"/>
    <property type="evidence" value="ECO:0000318"/>
    <property type="project" value="GO_Central"/>
</dbReference>
<dbReference type="GO" id="GO:0090103">
    <property type="term" value="P:cochlea morphogenesis"/>
    <property type="evidence" value="ECO:0007669"/>
    <property type="project" value="Ensembl"/>
</dbReference>
<dbReference type="GO" id="GO:0048596">
    <property type="term" value="P:embryonic camera-type eye morphogenesis"/>
    <property type="evidence" value="ECO:0007669"/>
    <property type="project" value="Ensembl"/>
</dbReference>
<dbReference type="GO" id="GO:0048704">
    <property type="term" value="P:embryonic skeletal system morphogenesis"/>
    <property type="evidence" value="ECO:0007669"/>
    <property type="project" value="Ensembl"/>
</dbReference>
<dbReference type="GO" id="GO:0043616">
    <property type="term" value="P:keratinocyte proliferation"/>
    <property type="evidence" value="ECO:0007669"/>
    <property type="project" value="Ensembl"/>
</dbReference>
<dbReference type="GO" id="GO:0045892">
    <property type="term" value="P:negative regulation of DNA-templated transcription"/>
    <property type="evidence" value="ECO:0000314"/>
    <property type="project" value="UniProtKB"/>
</dbReference>
<dbReference type="GO" id="GO:0045602">
    <property type="term" value="P:negative regulation of endothelial cell differentiation"/>
    <property type="evidence" value="ECO:0000315"/>
    <property type="project" value="BHF-UCL"/>
</dbReference>
<dbReference type="GO" id="GO:0010839">
    <property type="term" value="P:negative regulation of keratinocyte proliferation"/>
    <property type="evidence" value="ECO:0007669"/>
    <property type="project" value="Ensembl"/>
</dbReference>
<dbReference type="GO" id="GO:0000122">
    <property type="term" value="P:negative regulation of transcription by RNA polymerase II"/>
    <property type="evidence" value="ECO:0000314"/>
    <property type="project" value="BHF-UCL"/>
</dbReference>
<dbReference type="GO" id="GO:0007389">
    <property type="term" value="P:pattern specification process"/>
    <property type="evidence" value="ECO:0007669"/>
    <property type="project" value="Ensembl"/>
</dbReference>
<dbReference type="GO" id="GO:0045666">
    <property type="term" value="P:positive regulation of neuron differentiation"/>
    <property type="evidence" value="ECO:0000250"/>
    <property type="project" value="UniProtKB"/>
</dbReference>
<dbReference type="GO" id="GO:0045944">
    <property type="term" value="P:positive regulation of transcription by RNA polymerase II"/>
    <property type="evidence" value="ECO:0007669"/>
    <property type="project" value="Ensembl"/>
</dbReference>
<dbReference type="GO" id="GO:0010464">
    <property type="term" value="P:regulation of mesenchymal cell proliferation"/>
    <property type="evidence" value="ECO:0007669"/>
    <property type="project" value="Ensembl"/>
</dbReference>
<dbReference type="GO" id="GO:0051150">
    <property type="term" value="P:regulation of smooth muscle cell differentiation"/>
    <property type="evidence" value="ECO:0007669"/>
    <property type="project" value="Ensembl"/>
</dbReference>
<dbReference type="GO" id="GO:0033081">
    <property type="term" value="P:regulation of T cell differentiation in thymus"/>
    <property type="evidence" value="ECO:0007669"/>
    <property type="project" value="Ensembl"/>
</dbReference>
<dbReference type="GO" id="GO:0006357">
    <property type="term" value="P:regulation of transcription by RNA polymerase II"/>
    <property type="evidence" value="ECO:0000318"/>
    <property type="project" value="GO_Central"/>
</dbReference>
<dbReference type="GO" id="GO:0017015">
    <property type="term" value="P:regulation of transforming growth factor beta receptor signaling pathway"/>
    <property type="evidence" value="ECO:0007669"/>
    <property type="project" value="Ensembl"/>
</dbReference>
<dbReference type="GO" id="GO:0048752">
    <property type="term" value="P:semicircular canal morphogenesis"/>
    <property type="evidence" value="ECO:0007669"/>
    <property type="project" value="Ensembl"/>
</dbReference>
<dbReference type="FunFam" id="3.30.160.60:FF:000013">
    <property type="entry name" value="Putative zinc finger E-box-binding homeobox 2"/>
    <property type="match status" value="2"/>
</dbReference>
<dbReference type="FunFam" id="3.30.160.60:FF:000082">
    <property type="entry name" value="Putative zinc finger E-box-binding homeobox 2"/>
    <property type="match status" value="1"/>
</dbReference>
<dbReference type="FunFam" id="1.10.10.60:FF:000122">
    <property type="entry name" value="Zinc finger E-box binding homeobox 1"/>
    <property type="match status" value="1"/>
</dbReference>
<dbReference type="FunFam" id="3.30.160.60:FF:000744">
    <property type="entry name" value="zinc finger E-box-binding homeobox 1"/>
    <property type="match status" value="1"/>
</dbReference>
<dbReference type="FunFam" id="3.30.160.60:FF:000117">
    <property type="entry name" value="Zinc finger E-box-binding homeobox 2 isoform 1"/>
    <property type="match status" value="1"/>
</dbReference>
<dbReference type="FunFam" id="3.30.160.60:FF:000145">
    <property type="entry name" value="Zinc finger protein 574"/>
    <property type="match status" value="1"/>
</dbReference>
<dbReference type="Gene3D" id="3.30.160.60">
    <property type="entry name" value="Classic Zinc Finger"/>
    <property type="match status" value="6"/>
</dbReference>
<dbReference type="Gene3D" id="1.10.10.60">
    <property type="entry name" value="Homeodomain-like"/>
    <property type="match status" value="1"/>
</dbReference>
<dbReference type="InterPro" id="IPR008598">
    <property type="entry name" value="Di19_Zn-bd"/>
</dbReference>
<dbReference type="InterPro" id="IPR001356">
    <property type="entry name" value="HD"/>
</dbReference>
<dbReference type="InterPro" id="IPR009057">
    <property type="entry name" value="Homeodomain-like_sf"/>
</dbReference>
<dbReference type="InterPro" id="IPR036236">
    <property type="entry name" value="Znf_C2H2_sf"/>
</dbReference>
<dbReference type="InterPro" id="IPR013087">
    <property type="entry name" value="Znf_C2H2_type"/>
</dbReference>
<dbReference type="InterPro" id="IPR051574">
    <property type="entry name" value="ZnF_E-box_Homeobox"/>
</dbReference>
<dbReference type="PANTHER" id="PTHR24391">
    <property type="entry name" value="HISTONE H4 TRANSCRIPTION FACTOR-RELATED"/>
    <property type="match status" value="1"/>
</dbReference>
<dbReference type="PANTHER" id="PTHR24391:SF17">
    <property type="entry name" value="ZINC FINGER E-BOX-BINDING HOMEOBOX 1"/>
    <property type="match status" value="1"/>
</dbReference>
<dbReference type="Pfam" id="PF00096">
    <property type="entry name" value="zf-C2H2"/>
    <property type="match status" value="4"/>
</dbReference>
<dbReference type="Pfam" id="PF05605">
    <property type="entry name" value="zf-Di19"/>
    <property type="match status" value="1"/>
</dbReference>
<dbReference type="SMART" id="SM00389">
    <property type="entry name" value="HOX"/>
    <property type="match status" value="1"/>
</dbReference>
<dbReference type="SMART" id="SM00355">
    <property type="entry name" value="ZnF_C2H2"/>
    <property type="match status" value="7"/>
</dbReference>
<dbReference type="SUPFAM" id="SSF57667">
    <property type="entry name" value="beta-beta-alpha zinc fingers"/>
    <property type="match status" value="4"/>
</dbReference>
<dbReference type="SUPFAM" id="SSF46689">
    <property type="entry name" value="Homeodomain-like"/>
    <property type="match status" value="1"/>
</dbReference>
<dbReference type="PROSITE" id="PS00028">
    <property type="entry name" value="ZINC_FINGER_C2H2_1"/>
    <property type="match status" value="5"/>
</dbReference>
<dbReference type="PROSITE" id="PS50157">
    <property type="entry name" value="ZINC_FINGER_C2H2_2"/>
    <property type="match status" value="6"/>
</dbReference>
<evidence type="ECO:0000250" key="1">
    <source>
        <dbReference type="UniProtKB" id="Q62947"/>
    </source>
</evidence>
<evidence type="ECO:0000250" key="2">
    <source>
        <dbReference type="UniProtKB" id="Q64318"/>
    </source>
</evidence>
<evidence type="ECO:0000255" key="3">
    <source>
        <dbReference type="PROSITE-ProRule" id="PRU00042"/>
    </source>
</evidence>
<evidence type="ECO:0000256" key="4">
    <source>
        <dbReference type="SAM" id="MobiDB-lite"/>
    </source>
</evidence>
<evidence type="ECO:0000269" key="5">
    <source>
    </source>
</evidence>
<evidence type="ECO:0000269" key="6">
    <source>
    </source>
</evidence>
<evidence type="ECO:0000269" key="7">
    <source>
    </source>
</evidence>
<evidence type="ECO:0000269" key="8">
    <source>
    </source>
</evidence>
<evidence type="ECO:0000269" key="9">
    <source>
    </source>
</evidence>
<evidence type="ECO:0000269" key="10">
    <source>
    </source>
</evidence>
<evidence type="ECO:0000269" key="11">
    <source>
    </source>
</evidence>
<evidence type="ECO:0000269" key="12">
    <source>
    </source>
</evidence>
<evidence type="ECO:0000303" key="13">
    <source>
    </source>
</evidence>
<evidence type="ECO:0000303" key="14">
    <source>
    </source>
</evidence>
<evidence type="ECO:0000303" key="15">
    <source>
    </source>
</evidence>
<evidence type="ECO:0000303" key="16">
    <source ref="26"/>
</evidence>
<evidence type="ECO:0000305" key="17"/>
<evidence type="ECO:0000312" key="18">
    <source>
        <dbReference type="HGNC" id="HGNC:11642"/>
    </source>
</evidence>
<evidence type="ECO:0007744" key="19">
    <source>
    </source>
</evidence>
<evidence type="ECO:0007744" key="20">
    <source>
    </source>
</evidence>
<evidence type="ECO:0007744" key="21">
    <source>
    </source>
</evidence>
<evidence type="ECO:0007744" key="22">
    <source>
    </source>
</evidence>
<evidence type="ECO:0007744" key="23">
    <source>
    </source>
</evidence>
<evidence type="ECO:0007744" key="24">
    <source>
    </source>
</evidence>
<evidence type="ECO:0007744" key="25">
    <source>
    </source>
</evidence>
<evidence type="ECO:0007744" key="26">
    <source>
    </source>
</evidence>
<evidence type="ECO:0007744" key="27">
    <source>
    </source>
</evidence>
<evidence type="ECO:0007829" key="28">
    <source>
        <dbReference type="PDB" id="2E19"/>
    </source>
</evidence>
<comment type="function">
    <text evidence="2 6 8 9">Acts as a transcriptional repressor. Inhibits interleukin-2 (IL-2) gene expression. Enhances or represses the promoter activity of the ATP1A1 gene depending on the quantity of cDNA and on the cell type. Represses E-cadherin promoter and induces an epithelial-mesenchymal transition (EMT) by recruiting SMARCA4/BRG1. Represses BCL6 transcription in the presence of the corepressor CTBP1. Positively regulates neuronal differentiation. Represses RCOR1 transcription activation during neurogenesis. Represses transcription by binding to the E box (5'-CANNTG-3'). In the absence of TGFB1, acts as a repressor of COL1A2 transcription via binding to the E-box in the upstream enhancer region (By similarity).</text>
</comment>
<comment type="subunit">
    <text evidence="9">Interacts (via N-terminus) with SMARCA4/BRG1.</text>
</comment>
<comment type="subcellular location">
    <subcellularLocation>
        <location evidence="9 11">Nucleus</location>
    </subcellularLocation>
</comment>
<comment type="alternative products">
    <event type="alternative splicing"/>
    <isoform>
        <id>P37275-1</id>
        <name>1</name>
        <sequence type="displayed"/>
    </isoform>
    <isoform>
        <id>P37275-2</id>
        <name>2</name>
        <sequence type="described" ref="VSP_045184"/>
    </isoform>
    <isoform>
        <id>P37275-3</id>
        <name>3</name>
        <sequence type="described" ref="VSP_047280"/>
    </isoform>
    <isoform>
        <id>P37275-4</id>
        <name>4</name>
        <sequence type="described" ref="VSP_047281"/>
    </isoform>
    <isoform>
        <id>P37275-5</id>
        <name>5</name>
        <sequence type="described" ref="VSP_047279 VSP_045184"/>
    </isoform>
</comment>
<comment type="tissue specificity">
    <text evidence="9">Colocalizes with SMARCA4/BRG1 in E-cadherin-negative cells from established lines, and stroma of normal colon as well as in de-differentiated epithelial cells at the invasion front of colorectal carcinomas (at protein level). Expressed in heart and skeletal muscle, but not in liver, spleen, or pancreas.</text>
</comment>
<comment type="PTM">
    <text evidence="12">Ubiquitinated, leading to degradation in a proteasome-dependent manner. Deubiquitinated by USP51, leading to stabilization.</text>
</comment>
<comment type="disease" evidence="5 10">
    <disease id="DI-02186">
        <name>Corneal dystrophy, posterior polymorphous, 3</name>
        <acronym>PPCD3</acronym>
        <description>A subtype of posterior corneal dystrophy, a disease characterized by alterations of Descemet membrane presenting as vesicles, opacities or band-like lesions on slit-lamp examination and specular microscopy. Affected patient typically are asymptomatic.</description>
        <dbReference type="MIM" id="609141"/>
    </disease>
    <text>The disease is caused by variants affecting the gene represented in this entry.</text>
</comment>
<comment type="disease" evidence="7 10 11">
    <disease id="DI-02766">
        <name>Corneal dystrophy, Fuchs endothelial, 6</name>
        <acronym>FECD6</acronym>
        <description>A corneal disease caused by loss of endothelium of the central cornea. It is characterized by focal wart-like guttata that arise from Descemet membrane and develop in the central cornea, epithelial blisters, reduced vision and pain. Descemet membrane is thickened by abnormal collagenous deposition.</description>
        <dbReference type="MIM" id="613270"/>
    </disease>
    <text>The disease is caused by variants affecting the gene represented in this entry.</text>
</comment>
<comment type="similarity">
    <text evidence="17">Belongs to the delta-EF1/ZFH-1 C2H2-type zinc-finger family.</text>
</comment>
<comment type="sequence caution" evidence="17">
    <conflict type="frameshift">
        <sequence resource="EMBL-CDS" id="BAG62481"/>
    </conflict>
</comment>
<organism>
    <name type="scientific">Homo sapiens</name>
    <name type="common">Human</name>
    <dbReference type="NCBI Taxonomy" id="9606"/>
    <lineage>
        <taxon>Eukaryota</taxon>
        <taxon>Metazoa</taxon>
        <taxon>Chordata</taxon>
        <taxon>Craniata</taxon>
        <taxon>Vertebrata</taxon>
        <taxon>Euteleostomi</taxon>
        <taxon>Mammalia</taxon>
        <taxon>Eutheria</taxon>
        <taxon>Euarchontoglires</taxon>
        <taxon>Primates</taxon>
        <taxon>Haplorrhini</taxon>
        <taxon>Catarrhini</taxon>
        <taxon>Hominidae</taxon>
        <taxon>Homo</taxon>
    </lineage>
</organism>
<protein>
    <recommendedName>
        <fullName evidence="18">Zinc finger E-box-binding homeobox 1</fullName>
    </recommendedName>
    <alternativeName>
        <fullName evidence="16">NIL-2-A zinc finger protein</fullName>
    </alternativeName>
    <alternativeName>
        <fullName>Negative regulator of IL2</fullName>
    </alternativeName>
    <alternativeName>
        <fullName evidence="15">Transcription factor 8</fullName>
        <shortName evidence="15">TCF-8</shortName>
    </alternativeName>
</protein>
<keyword id="KW-0002">3D-structure</keyword>
<keyword id="KW-0010">Activator</keyword>
<keyword id="KW-0025">Alternative splicing</keyword>
<keyword id="KW-1212">Corneal dystrophy</keyword>
<keyword id="KW-0221">Differentiation</keyword>
<keyword id="KW-0225">Disease variant</keyword>
<keyword id="KW-0238">DNA-binding</keyword>
<keyword id="KW-0371">Homeobox</keyword>
<keyword id="KW-1017">Isopeptide bond</keyword>
<keyword id="KW-0479">Metal-binding</keyword>
<keyword id="KW-0524">Neurogenesis</keyword>
<keyword id="KW-0539">Nucleus</keyword>
<keyword id="KW-0597">Phosphoprotein</keyword>
<keyword id="KW-1267">Proteomics identification</keyword>
<keyword id="KW-1185">Reference proteome</keyword>
<keyword id="KW-0677">Repeat</keyword>
<keyword id="KW-0678">Repressor</keyword>
<keyword id="KW-0804">Transcription</keyword>
<keyword id="KW-0805">Transcription regulation</keyword>
<keyword id="KW-0832">Ubl conjugation</keyword>
<keyword id="KW-0862">Zinc</keyword>
<keyword id="KW-0863">Zinc-finger</keyword>
<accession>P37275</accession>
<accession>B4DJV0</accession>
<accession>B4DUW9</accession>
<accession>E9PCM7</accession>
<accession>F5H4I8</accession>
<accession>Q12924</accession>
<accession>Q13800</accession>
<accession>Q2KJ05</accession>
<accession>Q5T968</accession>
<accession>Q5VZ84</accession>
<accession>Q8NB68</accession>
<name>ZEB1_HUMAN</name>
<sequence>MADGPRCKRRKQANPRRNNVTNYNTVVETNSDSDDEDKLHIVEEESVTDAADCEGVPEDDLPTDQTVLPGRSSEREGNAKNCWEDDRKEGQEILGPEAQADEAGCTVKDDECESDAENEQNHDPNVEEFLQQQDTAVIFPEAPEEDQRQGTPEASGHDENGTPDAFSQLLTCPYCDRGYKRFTSLKEHIKYRHEKNEDNFSCSLCSYTFAYRTQLERHMTSHKSGRDQRHVTQSGCNRKFKCTECGKAFKYKHHLKEHLRIHSGEKPYECPNCKKRFSHSGSYSSHISSKKCISLIPVNGRPRTGLKTSQCSSPSLSASPGSPTRPQIRQKIENKPLQEQLSVNQIKTEPVDYEFKPIVVASGINCSTPLQNGVFTGGGPLQATSSPQGMVQAVVLPTVGLVSPISINLSDIQNVLKVAVDGNVIRQVLENNQANLASKEQETINASPIQQGGHSVISAISLPLVDQDGTTKIIINYSLEQPSQLQVVPQNLKKENPVATNSCKSEKLPEDLTVKSEKDKSFEGGVNDSTCLLCDDCPGDINALPELKHYDLKQPTQPPPLPAAEAEKPESSVSSATGDGNLSPSQPPLKNLLSLLKAYYALNAQPSAEELSKIADSVNLPLDVVKKWFEKMQAGQISVQSSEPSSPEPGKVNIPAKNNDQPQSANANEPQDSTVNLQSPLKMTNSPVLPVGSTTNGSRSSTPSPSPLNLSSSRNTQGYLYTAEGAQEEPQVEPLDLSLPKQQGELLERSTITSVYQNSVYSVQEEPLNLSCAKKEPQKDSCVTDSEPVVNVIPPSANPINIAIPTVTAQLPTIVAIADQNSVPCLRALAANKQTILIPQVAYTYSTTVSPAVQEPPLKVIQPNGNQDERQDTSSEGVSNVEDQNDSDSTPPKKKMRKTENGMYACDLCDKIFQKSSSLLRHKYEHTGKRPHECGICKKAFKHKHHLIEHMRLHSGEKPYQCDKCGKRFSHSGSYSQHMNHRYSYCKREAEERDSTEQEEAGPEILSNEHVGARASPSQGDSDERESLTREEDEDSEKEEEEEDKEMEELQEEKECEKPQGDEEEEEEEEEVEEEEVEEAENEGEEAKTEGLMKDDRAESQASSLGQKVGESSEQVSEEKTNEA</sequence>
<feature type="chain" id="PRO_0000047231" description="Zinc finger E-box-binding homeobox 1">
    <location>
        <begin position="1"/>
        <end position="1124"/>
    </location>
</feature>
<feature type="zinc finger region" description="C2H2-type 1" evidence="3">
    <location>
        <begin position="170"/>
        <end position="193"/>
    </location>
</feature>
<feature type="zinc finger region" description="C2H2-type 2" evidence="3">
    <location>
        <begin position="200"/>
        <end position="222"/>
    </location>
</feature>
<feature type="zinc finger region" description="C2H2-type 3" evidence="3">
    <location>
        <begin position="240"/>
        <end position="262"/>
    </location>
</feature>
<feature type="zinc finger region" description="C2H2-type 4; atypical" evidence="3">
    <location>
        <begin position="268"/>
        <end position="292"/>
    </location>
</feature>
<feature type="DNA-binding region" description="Homeobox; atypical">
    <location>
        <begin position="581"/>
        <end position="640"/>
    </location>
</feature>
<feature type="zinc finger region" description="C2H2-type 5" evidence="3">
    <location>
        <begin position="904"/>
        <end position="926"/>
    </location>
</feature>
<feature type="zinc finger region" description="C2H2-type 6" evidence="3">
    <location>
        <begin position="932"/>
        <end position="954"/>
    </location>
</feature>
<feature type="zinc finger region" description="C2H2-type 7; atypical" evidence="3">
    <location>
        <begin position="960"/>
        <end position="981"/>
    </location>
</feature>
<feature type="region of interest" description="Disordered" evidence="4">
    <location>
        <begin position="1"/>
        <end position="124"/>
    </location>
</feature>
<feature type="region of interest" description="Disordered" evidence="4">
    <location>
        <begin position="142"/>
        <end position="163"/>
    </location>
</feature>
<feature type="region of interest" description="Disordered" evidence="4">
    <location>
        <begin position="304"/>
        <end position="327"/>
    </location>
</feature>
<feature type="region of interest" description="Disordered" evidence="4">
    <location>
        <begin position="551"/>
        <end position="586"/>
    </location>
</feature>
<feature type="region of interest" description="Disordered" evidence="4">
    <location>
        <begin position="636"/>
        <end position="714"/>
    </location>
</feature>
<feature type="region of interest" description="Disordered" evidence="4">
    <location>
        <begin position="856"/>
        <end position="898"/>
    </location>
</feature>
<feature type="region of interest" description="Disordered" evidence="4">
    <location>
        <begin position="989"/>
        <end position="1124"/>
    </location>
</feature>
<feature type="compositionally biased region" description="Low complexity" evidence="4">
    <location>
        <begin position="18"/>
        <end position="30"/>
    </location>
</feature>
<feature type="compositionally biased region" description="Acidic residues" evidence="4">
    <location>
        <begin position="44"/>
        <end position="62"/>
    </location>
</feature>
<feature type="compositionally biased region" description="Basic and acidic residues" evidence="4">
    <location>
        <begin position="72"/>
        <end position="91"/>
    </location>
</feature>
<feature type="compositionally biased region" description="Low complexity" evidence="4">
    <location>
        <begin position="309"/>
        <end position="322"/>
    </location>
</feature>
<feature type="compositionally biased region" description="Polar residues" evidence="4">
    <location>
        <begin position="656"/>
        <end position="687"/>
    </location>
</feature>
<feature type="compositionally biased region" description="Low complexity" evidence="4">
    <location>
        <begin position="692"/>
        <end position="714"/>
    </location>
</feature>
<feature type="compositionally biased region" description="Polar residues" evidence="4">
    <location>
        <begin position="874"/>
        <end position="890"/>
    </location>
</feature>
<feature type="compositionally biased region" description="Acidic residues" evidence="4">
    <location>
        <begin position="1031"/>
        <end position="1052"/>
    </location>
</feature>
<feature type="compositionally biased region" description="Acidic residues" evidence="4">
    <location>
        <begin position="1062"/>
        <end position="1084"/>
    </location>
</feature>
<feature type="compositionally biased region" description="Basic and acidic residues" evidence="4">
    <location>
        <begin position="1085"/>
        <end position="1099"/>
    </location>
</feature>
<feature type="compositionally biased region" description="Polar residues" evidence="4">
    <location>
        <begin position="1100"/>
        <end position="1115"/>
    </location>
</feature>
<feature type="modified residue" description="Phosphoserine" evidence="1">
    <location>
        <position position="31"/>
    </location>
</feature>
<feature type="modified residue" description="Phosphoserine" evidence="1">
    <location>
        <position position="33"/>
    </location>
</feature>
<feature type="modified residue" description="Phosphoserine" evidence="2">
    <location>
        <position position="313"/>
    </location>
</feature>
<feature type="modified residue" description="Phosphoserine" evidence="19">
    <location>
        <position position="322"/>
    </location>
</feature>
<feature type="modified residue" description="Phosphoserine" evidence="20">
    <location>
        <position position="642"/>
    </location>
</feature>
<feature type="modified residue" description="Phosphoserine" evidence="20 21 22">
    <location>
        <position position="679"/>
    </location>
</feature>
<feature type="modified residue" description="Phosphoserine" evidence="2">
    <location>
        <position position="686"/>
    </location>
</feature>
<feature type="modified residue" description="Phosphoserine" evidence="2">
    <location>
        <position position="693"/>
    </location>
</feature>
<feature type="modified residue" description="Phosphoserine" evidence="2">
    <location>
        <position position="700"/>
    </location>
</feature>
<feature type="modified residue" description="Phosphothreonine" evidence="20 22">
    <location>
        <position position="702"/>
    </location>
</feature>
<feature type="modified residue" description="Phosphoserine" evidence="2">
    <location>
        <position position="704"/>
    </location>
</feature>
<feature type="cross-link" description="Glycyl lysine isopeptide (Lys-Gly) (interchain with G-Cter in SUMO2)" evidence="27">
    <location>
        <position position="186"/>
    </location>
</feature>
<feature type="cross-link" description="Glycyl lysine isopeptide (Lys-Gly) (interchain with G-Cter in SUMO2)" evidence="27">
    <location>
        <position position="195"/>
    </location>
</feature>
<feature type="cross-link" description="Glycyl lysine isopeptide (Lys-Gly) (interchain with G-Cter in SUMO2)" evidence="27">
    <location>
        <position position="307"/>
    </location>
</feature>
<feature type="cross-link" description="Glycyl lysine isopeptide (Lys-Gly) (interchain with G-Cter in SUMO2)" evidence="27">
    <location>
        <position position="331"/>
    </location>
</feature>
<feature type="cross-link" description="Glycyl lysine isopeptide (Lys-Gly) (interchain with G-Cter in SUMO2)" evidence="27">
    <location>
        <position position="335"/>
    </location>
</feature>
<feature type="cross-link" description="Glycyl lysine isopeptide (Lys-Gly) (interchain with G-Cter in SUMO); alternate">
    <location>
        <position position="347"/>
    </location>
</feature>
<feature type="cross-link" description="Glycyl lysine isopeptide (Lys-Gly) (interchain with G-Cter in SUMO2); alternate" evidence="27">
    <location>
        <position position="347"/>
    </location>
</feature>
<feature type="cross-link" description="Glycyl lysine isopeptide (Lys-Gly) (interchain with G-Cter in SUMO2)" evidence="27">
    <location>
        <position position="439"/>
    </location>
</feature>
<feature type="cross-link" description="Glycyl lysine isopeptide (Lys-Gly) (interchain with G-Cter in SUMO2)" evidence="23 24 25 26 27">
    <location>
        <position position="493"/>
    </location>
</feature>
<feature type="cross-link" description="Glycyl lysine isopeptide (Lys-Gly) (interchain with G-Cter in SUMO2)" evidence="24 25 26 27">
    <location>
        <position position="504"/>
    </location>
</feature>
<feature type="cross-link" description="Glycyl lysine isopeptide (Lys-Gly) (interchain with G-Cter in SUMO2)" evidence="24 25 26 27">
    <location>
        <position position="515"/>
    </location>
</feature>
<feature type="cross-link" description="Glycyl lysine isopeptide (Lys-Gly) (interchain with G-Cter in SUMO2)" evidence="27">
    <location>
        <position position="548"/>
    </location>
</feature>
<feature type="cross-link" description="Glycyl lysine isopeptide (Lys-Gly) (interchain with G-Cter in SUMO2)" evidence="27">
    <location>
        <position position="553"/>
    </location>
</feature>
<feature type="cross-link" description="Glycyl lysine isopeptide (Lys-Gly) (interchain with G-Cter in SUMO); alternate">
    <location>
        <position position="774"/>
    </location>
</feature>
<feature type="cross-link" description="Glycyl lysine isopeptide (Lys-Gly) (interchain with G-Cter in SUMO2); alternate" evidence="27">
    <location>
        <position position="774"/>
    </location>
</feature>
<feature type="splice variant" id="VSP_047279" description="In isoform 5." evidence="13">
    <original>MADGPRCKRRKQANPRRNN</original>
    <variation>MK</variation>
    <location>
        <begin position="1"/>
        <end position="19"/>
    </location>
</feature>
<feature type="splice variant" id="VSP_047280" description="In isoform 3." evidence="13">
    <original>VTNYNTVVETNSDSDDEDKLHIVEEESVTDAADCEGVPEDDLPTDQTVLPGRSSEREGNAKNCWEDDR</original>
    <variation>G</variation>
    <location>
        <begin position="20"/>
        <end position="87"/>
    </location>
</feature>
<feature type="splice variant" id="VSP_047281" description="In isoform 4." evidence="13">
    <original>RKEGQEILGPEAQADEAGCTV</original>
    <variation>I</variation>
    <location>
        <begin position="87"/>
        <end position="107"/>
    </location>
</feature>
<feature type="splice variant" id="VSP_045184" description="In isoform 2 and isoform 5." evidence="13 14">
    <original>R</original>
    <variation>TG</variation>
    <location>
        <position position="87"/>
    </location>
</feature>
<feature type="sequence variant" id="VAR_063759" description="In FECD6; no effect on protein expression; no effect on nuclear localization; dbSNP:rs80194531." evidence="7 10 11">
    <original>N</original>
    <variation>T</variation>
    <location>
        <position position="78"/>
    </location>
</feature>
<feature type="sequence variant" id="VAR_052731" description="In dbSNP:rs12217419.">
    <original>G</original>
    <variation>R</variation>
    <location>
        <position position="90"/>
    </location>
</feature>
<feature type="sequence variant" id="VAR_072897" description="Found in a patient with FECD6." evidence="10">
    <original>G</original>
    <variation>E</variation>
    <location>
        <position position="525"/>
    </location>
</feature>
<feature type="sequence variant" id="VAR_031824" description="In dbSNP:rs35753967.">
    <original>K</original>
    <variation>R</variation>
    <location>
        <position position="553"/>
    </location>
</feature>
<feature type="sequence variant" id="VAR_072898" description="In FECD6; down-regulation of several collagen genes expression; dbSNP:rs779148597." evidence="10">
    <original>Q</original>
    <variation>H</variation>
    <location>
        <position position="640"/>
    </location>
</feature>
<feature type="sequence variant" id="VAR_063760" description="In FECD6; no effect on protein expression; no effect on nuclear localization; dbSNP:rs781750314." evidence="7 11">
    <original>P</original>
    <variation>A</variation>
    <location>
        <position position="649"/>
    </location>
</feature>
<feature type="sequence variant" id="VAR_072899" description="In FECD6; no effect on protein expression; no effect on nuclear localization; dbSNP:rs567252241." evidence="11">
    <original>N</original>
    <variation>S</variation>
    <location>
        <position position="696"/>
    </location>
</feature>
<feature type="sequence variant" id="VAR_063761" description="In FECD6; no effect on protein expression; no effect on nuclear localization; dbSNP:rs199944415." evidence="7 11">
    <original>Q</original>
    <variation>P</variation>
    <location>
        <position position="810"/>
    </location>
</feature>
<feature type="sequence variant" id="VAR_063762" description="In FECD6; no effect on protein expression; no effect on nuclear localization; dbSNP:rs118020901." evidence="7 11">
    <original>Q</original>
    <variation>P</variation>
    <location>
        <position position="840"/>
    </location>
</feature>
<feature type="sequence variant" id="VAR_072900" description="In FECD6; no effect on protein expression; no effect on nuclear localization; dbSNP:rs78449005." evidence="11">
    <original>A</original>
    <variation>G</variation>
    <location>
        <position position="905"/>
    </location>
</feature>
<feature type="sequence variant" id="VAR_063763" description="In FECD6." evidence="7">
    <original>A</original>
    <variation>T</variation>
    <location>
        <position position="905"/>
    </location>
</feature>
<feature type="sequence conflict" description="In Ref. 3; BAC03673." evidence="17" ref="3">
    <original>Q</original>
    <variation>R</variation>
    <location>
        <position position="12"/>
    </location>
</feature>
<feature type="sequence conflict" description="In Ref. 3; BAC03673." evidence="17" ref="3">
    <original>N</original>
    <variation>S</variation>
    <location>
        <position position="81"/>
    </location>
</feature>
<feature type="sequence conflict" description="In Ref. 3; BAC03673." evidence="17" ref="3">
    <original>E</original>
    <variation>K</variation>
    <location>
        <position position="84"/>
    </location>
</feature>
<feature type="sequence conflict" description="In Ref. 3; BAG62481." evidence="17" ref="3">
    <original>T</original>
    <variation>A</variation>
    <location>
        <position position="220"/>
    </location>
</feature>
<feature type="sequence conflict" description="In Ref. 3; BAG62481." evidence="17" ref="3">
    <original>M</original>
    <variation>T</variation>
    <location>
        <position position="390"/>
    </location>
</feature>
<feature type="sequence conflict" description="In Ref. 2; AAA20602." evidence="17" ref="2">
    <original>V</original>
    <variation>I</variation>
    <location>
        <position position="420"/>
    </location>
</feature>
<feature type="sequence conflict" description="In Ref. 3; BAG58962." evidence="17" ref="3">
    <original>K</original>
    <variation>R</variation>
    <location>
        <position position="472"/>
    </location>
</feature>
<feature type="sequence conflict" description="In Ref. 7; M81699." evidence="17" ref="7">
    <original>E</original>
    <variation>Q</variation>
    <location>
        <position position="609"/>
    </location>
</feature>
<feature type="sequence conflict" description="In Ref. 2; AAA20602." evidence="17" ref="2">
    <original>I</original>
    <variation>T</variation>
    <location>
        <position position="654"/>
    </location>
</feature>
<feature type="sequence conflict" description="In Ref. 7; M81699." evidence="17" ref="7">
    <original>D</original>
    <variation>H</variation>
    <location>
        <position position="672"/>
    </location>
</feature>
<feature type="sequence conflict" description="In Ref. 7; M81699." evidence="17" ref="7">
    <original>L</original>
    <variation>S</variation>
    <location>
        <position position="681"/>
    </location>
</feature>
<feature type="sequence conflict" description="In Ref. 3; BAG62481." evidence="17" ref="3">
    <original>K</original>
    <variation>T</variation>
    <location>
        <position position="775"/>
    </location>
</feature>
<feature type="sequence conflict" description="In Ref. 3; BAG58962." evidence="17" ref="3">
    <original>IP</original>
    <variation>KY</variation>
    <location>
        <begin position="793"/>
        <end position="794"/>
    </location>
</feature>
<feature type="sequence conflict" description="In Ref. 3; BAG58962." evidence="17" ref="3">
    <original>A</original>
    <variation>N</variation>
    <location>
        <position position="797"/>
    </location>
</feature>
<feature type="sequence conflict" description="In Ref. 3; BAG62481." evidence="17" ref="3">
    <original>A</original>
    <variation>V</variation>
    <location>
        <position position="818"/>
    </location>
</feature>
<feature type="sequence conflict" description="In Ref. 3; BAC03673." evidence="17" ref="3">
    <original>I</original>
    <variation>T</variation>
    <location>
        <position position="838"/>
    </location>
</feature>
<feature type="sequence conflict" description="In Ref. 3; BAC03673." evidence="17" ref="3">
    <original>E</original>
    <variation>G</variation>
    <location>
        <position position="1066"/>
    </location>
</feature>
<feature type="helix" evidence="28">
    <location>
        <begin position="590"/>
        <end position="600"/>
    </location>
</feature>
<feature type="helix" evidence="28">
    <location>
        <begin position="608"/>
        <end position="618"/>
    </location>
</feature>
<feature type="helix" evidence="28">
    <location>
        <begin position="622"/>
        <end position="634"/>
    </location>
</feature>
<gene>
    <name evidence="18" type="primary">ZEB1</name>
    <name evidence="2" type="synonym">AREB6</name>
    <name evidence="15" type="synonym">TCF8</name>
</gene>
<proteinExistence type="evidence at protein level"/>